<comment type="function">
    <text evidence="1">Specifically methylates position 2 of adenine 2503 in 23S rRNA and position 2 of adenine 37 in tRNAs.</text>
</comment>
<comment type="catalytic activity">
    <reaction evidence="1">
        <text>adenosine(2503) in 23S rRNA + 2 reduced [2Fe-2S]-[ferredoxin] + 2 S-adenosyl-L-methionine = 2-methyladenosine(2503) in 23S rRNA + 5'-deoxyadenosine + L-methionine + 2 oxidized [2Fe-2S]-[ferredoxin] + S-adenosyl-L-homocysteine</text>
        <dbReference type="Rhea" id="RHEA:42916"/>
        <dbReference type="Rhea" id="RHEA-COMP:10000"/>
        <dbReference type="Rhea" id="RHEA-COMP:10001"/>
        <dbReference type="Rhea" id="RHEA-COMP:10152"/>
        <dbReference type="Rhea" id="RHEA-COMP:10282"/>
        <dbReference type="ChEBI" id="CHEBI:17319"/>
        <dbReference type="ChEBI" id="CHEBI:33737"/>
        <dbReference type="ChEBI" id="CHEBI:33738"/>
        <dbReference type="ChEBI" id="CHEBI:57844"/>
        <dbReference type="ChEBI" id="CHEBI:57856"/>
        <dbReference type="ChEBI" id="CHEBI:59789"/>
        <dbReference type="ChEBI" id="CHEBI:74411"/>
        <dbReference type="ChEBI" id="CHEBI:74497"/>
        <dbReference type="EC" id="2.1.1.192"/>
    </reaction>
</comment>
<comment type="catalytic activity">
    <reaction evidence="1">
        <text>adenosine(37) in tRNA + 2 reduced [2Fe-2S]-[ferredoxin] + 2 S-adenosyl-L-methionine = 2-methyladenosine(37) in tRNA + 5'-deoxyadenosine + L-methionine + 2 oxidized [2Fe-2S]-[ferredoxin] + S-adenosyl-L-homocysteine</text>
        <dbReference type="Rhea" id="RHEA:43332"/>
        <dbReference type="Rhea" id="RHEA-COMP:10000"/>
        <dbReference type="Rhea" id="RHEA-COMP:10001"/>
        <dbReference type="Rhea" id="RHEA-COMP:10162"/>
        <dbReference type="Rhea" id="RHEA-COMP:10485"/>
        <dbReference type="ChEBI" id="CHEBI:17319"/>
        <dbReference type="ChEBI" id="CHEBI:33737"/>
        <dbReference type="ChEBI" id="CHEBI:33738"/>
        <dbReference type="ChEBI" id="CHEBI:57844"/>
        <dbReference type="ChEBI" id="CHEBI:57856"/>
        <dbReference type="ChEBI" id="CHEBI:59789"/>
        <dbReference type="ChEBI" id="CHEBI:74411"/>
        <dbReference type="ChEBI" id="CHEBI:74497"/>
        <dbReference type="EC" id="2.1.1.192"/>
    </reaction>
</comment>
<comment type="cofactor">
    <cofactor evidence="1">
        <name>[4Fe-4S] cluster</name>
        <dbReference type="ChEBI" id="CHEBI:49883"/>
    </cofactor>
    <text evidence="1">Binds 1 [4Fe-4S] cluster. The cluster is coordinated with 3 cysteines and an exchangeable S-adenosyl-L-methionine.</text>
</comment>
<comment type="subcellular location">
    <subcellularLocation>
        <location evidence="1">Cytoplasm</location>
    </subcellularLocation>
</comment>
<comment type="miscellaneous">
    <text evidence="1">Reaction proceeds by a ping-pong mechanism involving intermediate methylation of a conserved cysteine residue.</text>
</comment>
<comment type="similarity">
    <text evidence="1">Belongs to the radical SAM superfamily. RlmN family.</text>
</comment>
<proteinExistence type="inferred from homology"/>
<dbReference type="EC" id="2.1.1.192" evidence="1"/>
<dbReference type="EMBL" id="LT708304">
    <property type="protein sequence ID" value="SIU01525.1"/>
    <property type="molecule type" value="Genomic_DNA"/>
</dbReference>
<dbReference type="RefSeq" id="NP_856549.1">
    <property type="nucleotide sequence ID" value="NC_002945.3"/>
</dbReference>
<dbReference type="RefSeq" id="WP_003414658.1">
    <property type="nucleotide sequence ID" value="NC_002945.4"/>
</dbReference>
<dbReference type="SMR" id="P0A645"/>
<dbReference type="GeneID" id="45426868"/>
<dbReference type="KEGG" id="mbo:BQ2027_MB2904C"/>
<dbReference type="PATRIC" id="fig|233413.5.peg.3187"/>
<dbReference type="Proteomes" id="UP000001419">
    <property type="component" value="Chromosome"/>
</dbReference>
<dbReference type="GO" id="GO:0005737">
    <property type="term" value="C:cytoplasm"/>
    <property type="evidence" value="ECO:0007669"/>
    <property type="project" value="UniProtKB-SubCell"/>
</dbReference>
<dbReference type="GO" id="GO:0051539">
    <property type="term" value="F:4 iron, 4 sulfur cluster binding"/>
    <property type="evidence" value="ECO:0007669"/>
    <property type="project" value="UniProtKB-UniRule"/>
</dbReference>
<dbReference type="GO" id="GO:0046872">
    <property type="term" value="F:metal ion binding"/>
    <property type="evidence" value="ECO:0007669"/>
    <property type="project" value="UniProtKB-KW"/>
</dbReference>
<dbReference type="GO" id="GO:0070040">
    <property type="term" value="F:rRNA (adenine(2503)-C2-)-methyltransferase activity"/>
    <property type="evidence" value="ECO:0007669"/>
    <property type="project" value="UniProtKB-UniRule"/>
</dbReference>
<dbReference type="GO" id="GO:0019843">
    <property type="term" value="F:rRNA binding"/>
    <property type="evidence" value="ECO:0007669"/>
    <property type="project" value="UniProtKB-UniRule"/>
</dbReference>
<dbReference type="GO" id="GO:0002935">
    <property type="term" value="F:tRNA (adenine(37)-C2)-methyltransferase activity"/>
    <property type="evidence" value="ECO:0007669"/>
    <property type="project" value="UniProtKB-UniRule"/>
</dbReference>
<dbReference type="GO" id="GO:0000049">
    <property type="term" value="F:tRNA binding"/>
    <property type="evidence" value="ECO:0007669"/>
    <property type="project" value="UniProtKB-UniRule"/>
</dbReference>
<dbReference type="GO" id="GO:0070475">
    <property type="term" value="P:rRNA base methylation"/>
    <property type="evidence" value="ECO:0007669"/>
    <property type="project" value="UniProtKB-UniRule"/>
</dbReference>
<dbReference type="GO" id="GO:0030488">
    <property type="term" value="P:tRNA methylation"/>
    <property type="evidence" value="ECO:0007669"/>
    <property type="project" value="UniProtKB-UniRule"/>
</dbReference>
<dbReference type="CDD" id="cd01335">
    <property type="entry name" value="Radical_SAM"/>
    <property type="match status" value="1"/>
</dbReference>
<dbReference type="FunFam" id="1.10.150.530:FF:000004">
    <property type="entry name" value="Probable dual-specificity RNA methyltransferase RlmN"/>
    <property type="match status" value="1"/>
</dbReference>
<dbReference type="FunFam" id="3.20.20.70:FF:000014">
    <property type="entry name" value="Probable dual-specificity RNA methyltransferase RlmN"/>
    <property type="match status" value="1"/>
</dbReference>
<dbReference type="Gene3D" id="1.10.150.530">
    <property type="match status" value="1"/>
</dbReference>
<dbReference type="Gene3D" id="3.20.20.70">
    <property type="entry name" value="Aldolase class I"/>
    <property type="match status" value="1"/>
</dbReference>
<dbReference type="HAMAP" id="MF_01849">
    <property type="entry name" value="RNA_methyltr_RlmN"/>
    <property type="match status" value="1"/>
</dbReference>
<dbReference type="InterPro" id="IPR013785">
    <property type="entry name" value="Aldolase_TIM"/>
</dbReference>
<dbReference type="InterPro" id="IPR040072">
    <property type="entry name" value="Methyltransferase_A"/>
</dbReference>
<dbReference type="InterPro" id="IPR027492">
    <property type="entry name" value="RNA_MTrfase_RlmN"/>
</dbReference>
<dbReference type="InterPro" id="IPR004383">
    <property type="entry name" value="rRNA_lsu_MTrfase_RlmN/Cfr"/>
</dbReference>
<dbReference type="InterPro" id="IPR007197">
    <property type="entry name" value="rSAM"/>
</dbReference>
<dbReference type="NCBIfam" id="TIGR00048">
    <property type="entry name" value="rRNA_mod_RlmN"/>
    <property type="match status" value="1"/>
</dbReference>
<dbReference type="PANTHER" id="PTHR30544">
    <property type="entry name" value="23S RRNA METHYLTRANSFERASE"/>
    <property type="match status" value="1"/>
</dbReference>
<dbReference type="PANTHER" id="PTHR30544:SF5">
    <property type="entry name" value="RADICAL SAM CORE DOMAIN-CONTAINING PROTEIN"/>
    <property type="match status" value="1"/>
</dbReference>
<dbReference type="Pfam" id="PF04055">
    <property type="entry name" value="Radical_SAM"/>
    <property type="match status" value="1"/>
</dbReference>
<dbReference type="PIRSF" id="PIRSF006004">
    <property type="entry name" value="CHP00048"/>
    <property type="match status" value="1"/>
</dbReference>
<dbReference type="SFLD" id="SFLDF00275">
    <property type="entry name" value="adenosine_C2_methyltransferase"/>
    <property type="match status" value="1"/>
</dbReference>
<dbReference type="SFLD" id="SFLDG01062">
    <property type="entry name" value="methyltransferase_(Class_A)"/>
    <property type="match status" value="1"/>
</dbReference>
<dbReference type="SUPFAM" id="SSF102114">
    <property type="entry name" value="Radical SAM enzymes"/>
    <property type="match status" value="1"/>
</dbReference>
<dbReference type="PROSITE" id="PS51918">
    <property type="entry name" value="RADICAL_SAM"/>
    <property type="match status" value="1"/>
</dbReference>
<evidence type="ECO:0000255" key="1">
    <source>
        <dbReference type="HAMAP-Rule" id="MF_01849"/>
    </source>
</evidence>
<evidence type="ECO:0000255" key="2">
    <source>
        <dbReference type="PROSITE-ProRule" id="PRU01266"/>
    </source>
</evidence>
<keyword id="KW-0004">4Fe-4S</keyword>
<keyword id="KW-0963">Cytoplasm</keyword>
<keyword id="KW-1015">Disulfide bond</keyword>
<keyword id="KW-0408">Iron</keyword>
<keyword id="KW-0411">Iron-sulfur</keyword>
<keyword id="KW-0479">Metal-binding</keyword>
<keyword id="KW-0489">Methyltransferase</keyword>
<keyword id="KW-1185">Reference proteome</keyword>
<keyword id="KW-0698">rRNA processing</keyword>
<keyword id="KW-0949">S-adenosyl-L-methionine</keyword>
<keyword id="KW-0808">Transferase</keyword>
<keyword id="KW-0819">tRNA processing</keyword>
<reference key="1">
    <citation type="journal article" date="2003" name="Proc. Natl. Acad. Sci. U.S.A.">
        <title>The complete genome sequence of Mycobacterium bovis.</title>
        <authorList>
            <person name="Garnier T."/>
            <person name="Eiglmeier K."/>
            <person name="Camus J.-C."/>
            <person name="Medina N."/>
            <person name="Mansoor H."/>
            <person name="Pryor M."/>
            <person name="Duthoy S."/>
            <person name="Grondin S."/>
            <person name="Lacroix C."/>
            <person name="Monsempe C."/>
            <person name="Simon S."/>
            <person name="Harris B."/>
            <person name="Atkin R."/>
            <person name="Doggett J."/>
            <person name="Mayes R."/>
            <person name="Keating L."/>
            <person name="Wheeler P.R."/>
            <person name="Parkhill J."/>
            <person name="Barrell B.G."/>
            <person name="Cole S.T."/>
            <person name="Gordon S.V."/>
            <person name="Hewinson R.G."/>
        </authorList>
    </citation>
    <scope>NUCLEOTIDE SEQUENCE [LARGE SCALE GENOMIC DNA]</scope>
    <source>
        <strain>ATCC BAA-935 / AF2122/97</strain>
    </source>
</reference>
<reference key="2">
    <citation type="journal article" date="2017" name="Genome Announc.">
        <title>Updated reference genome sequence and annotation of Mycobacterium bovis AF2122/97.</title>
        <authorList>
            <person name="Malone K.M."/>
            <person name="Farrell D."/>
            <person name="Stuber T.P."/>
            <person name="Schubert O.T."/>
            <person name="Aebersold R."/>
            <person name="Robbe-Austerman S."/>
            <person name="Gordon S.V."/>
        </authorList>
    </citation>
    <scope>NUCLEOTIDE SEQUENCE [LARGE SCALE GENOMIC DNA]</scope>
    <scope>GENOME REANNOTATION</scope>
    <source>
        <strain>ATCC BAA-935 / AF2122/97</strain>
    </source>
</reference>
<feature type="chain" id="PRO_0000171928" description="Probable dual-specificity RNA methyltransferase RlmN">
    <location>
        <begin position="1"/>
        <end position="364"/>
    </location>
</feature>
<feature type="domain" description="Radical SAM core" evidence="2">
    <location>
        <begin position="112"/>
        <end position="350"/>
    </location>
</feature>
<feature type="active site" description="Proton acceptor" evidence="1">
    <location>
        <position position="106"/>
    </location>
</feature>
<feature type="active site" description="S-methylcysteine intermediate" evidence="1">
    <location>
        <position position="356"/>
    </location>
</feature>
<feature type="binding site" evidence="1">
    <location>
        <position position="126"/>
    </location>
    <ligand>
        <name>[4Fe-4S] cluster</name>
        <dbReference type="ChEBI" id="CHEBI:49883"/>
        <note>4Fe-4S-S-AdoMet</note>
    </ligand>
</feature>
<feature type="binding site" evidence="1">
    <location>
        <position position="130"/>
    </location>
    <ligand>
        <name>[4Fe-4S] cluster</name>
        <dbReference type="ChEBI" id="CHEBI:49883"/>
        <note>4Fe-4S-S-AdoMet</note>
    </ligand>
</feature>
<feature type="binding site" evidence="1">
    <location>
        <position position="133"/>
    </location>
    <ligand>
        <name>[4Fe-4S] cluster</name>
        <dbReference type="ChEBI" id="CHEBI:49883"/>
        <note>4Fe-4S-S-AdoMet</note>
    </ligand>
</feature>
<feature type="binding site" evidence="1">
    <location>
        <begin position="177"/>
        <end position="178"/>
    </location>
    <ligand>
        <name>S-adenosyl-L-methionine</name>
        <dbReference type="ChEBI" id="CHEBI:59789"/>
    </ligand>
</feature>
<feature type="binding site" evidence="1">
    <location>
        <position position="211"/>
    </location>
    <ligand>
        <name>S-adenosyl-L-methionine</name>
        <dbReference type="ChEBI" id="CHEBI:59789"/>
    </ligand>
</feature>
<feature type="binding site" evidence="1">
    <location>
        <begin position="234"/>
        <end position="236"/>
    </location>
    <ligand>
        <name>S-adenosyl-L-methionine</name>
        <dbReference type="ChEBI" id="CHEBI:59789"/>
    </ligand>
</feature>
<feature type="binding site" evidence="1">
    <location>
        <position position="313"/>
    </location>
    <ligand>
        <name>S-adenosyl-L-methionine</name>
        <dbReference type="ChEBI" id="CHEBI:59789"/>
    </ligand>
</feature>
<feature type="disulfide bond" description="(transient)" evidence="1">
    <location>
        <begin position="119"/>
        <end position="356"/>
    </location>
</feature>
<protein>
    <recommendedName>
        <fullName evidence="1">Probable dual-specificity RNA methyltransferase RlmN</fullName>
        <ecNumber evidence="1">2.1.1.192</ecNumber>
    </recommendedName>
    <alternativeName>
        <fullName evidence="1">23S rRNA (adenine(2503)-C(2))-methyltransferase</fullName>
    </alternativeName>
    <alternativeName>
        <fullName evidence="1">23S rRNA m2A2503 methyltransferase</fullName>
    </alternativeName>
    <alternativeName>
        <fullName evidence="1">Ribosomal RNA large subunit methyltransferase N</fullName>
    </alternativeName>
    <alternativeName>
        <fullName evidence="1">tRNA (adenine(37)-C(2))-methyltransferase</fullName>
    </alternativeName>
    <alternativeName>
        <fullName evidence="1">tRNA m2A37 methyltransferase</fullName>
    </alternativeName>
</protein>
<gene>
    <name evidence="1" type="primary">rlmN</name>
    <name type="ordered locus">BQ2027_MB2904C</name>
</gene>
<sequence>MVPELMFDEPRPGRPPRHLADLDAAGRASAVAELGLPAFRAKQLAHQYYGRLIADPRQMTDLPAAVRDRIAGAMFPNLLTASADITCDAGQTRKTLWRAVDGTMFESVLMRYPRRNTVCISSQAGCGMACPFCATGQGGLTRNLSTAEILEQVRAGAAALRDDFGDRLSNVVFMGMGEPLANYARVLAAVQRITARPPSGFGISARAVTVSTVGLAPAIRNLADARLGVTLALSLHAPDDGLRDTLVPVNNRWRISEALDAARYYANVTGRRVSIEYALIRDVNDQPWRADLLGKRLHRVLGPLAHVNLIPLNPTPGSDWDASPKPVEREFVKRVRAKGVSCTVRDTRGREISAACGQLAAVGG</sequence>
<organism>
    <name type="scientific">Mycobacterium bovis (strain ATCC BAA-935 / AF2122/97)</name>
    <dbReference type="NCBI Taxonomy" id="233413"/>
    <lineage>
        <taxon>Bacteria</taxon>
        <taxon>Bacillati</taxon>
        <taxon>Actinomycetota</taxon>
        <taxon>Actinomycetes</taxon>
        <taxon>Mycobacteriales</taxon>
        <taxon>Mycobacteriaceae</taxon>
        <taxon>Mycobacterium</taxon>
        <taxon>Mycobacterium tuberculosis complex</taxon>
    </lineage>
</organism>
<name>RLMN_MYCBO</name>
<accession>P0A645</accession>
<accession>A0A1R3Y4G5</accession>
<accession>Q10805</accession>
<accession>Q10806</accession>
<accession>X2BMN8</accession>